<accession>Q2JH49</accession>
<gene>
    <name evidence="1" type="primary">dnaJ</name>
    <name type="ordered locus">CYB_2935</name>
</gene>
<keyword id="KW-0143">Chaperone</keyword>
<keyword id="KW-0963">Cytoplasm</keyword>
<keyword id="KW-0235">DNA replication</keyword>
<keyword id="KW-0479">Metal-binding</keyword>
<keyword id="KW-1185">Reference proteome</keyword>
<keyword id="KW-0677">Repeat</keyword>
<keyword id="KW-0346">Stress response</keyword>
<keyword id="KW-0862">Zinc</keyword>
<keyword id="KW-0863">Zinc-finger</keyword>
<reference key="1">
    <citation type="journal article" date="2007" name="ISME J.">
        <title>Population level functional diversity in a microbial community revealed by comparative genomic and metagenomic analyses.</title>
        <authorList>
            <person name="Bhaya D."/>
            <person name="Grossman A.R."/>
            <person name="Steunou A.-S."/>
            <person name="Khuri N."/>
            <person name="Cohan F.M."/>
            <person name="Hamamura N."/>
            <person name="Melendrez M.C."/>
            <person name="Bateson M.M."/>
            <person name="Ward D.M."/>
            <person name="Heidelberg J.F."/>
        </authorList>
    </citation>
    <scope>NUCLEOTIDE SEQUENCE [LARGE SCALE GENOMIC DNA]</scope>
    <source>
        <strain>JA-2-3B'a(2-13)</strain>
    </source>
</reference>
<dbReference type="EMBL" id="CP000240">
    <property type="protein sequence ID" value="ABD03854.1"/>
    <property type="molecule type" value="Genomic_DNA"/>
</dbReference>
<dbReference type="RefSeq" id="WP_011434470.1">
    <property type="nucleotide sequence ID" value="NC_007776.1"/>
</dbReference>
<dbReference type="SMR" id="Q2JH49"/>
<dbReference type="STRING" id="321332.CYB_2935"/>
<dbReference type="KEGG" id="cyb:CYB_2935"/>
<dbReference type="eggNOG" id="COG0484">
    <property type="taxonomic scope" value="Bacteria"/>
</dbReference>
<dbReference type="HOGENOM" id="CLU_017633_0_1_3"/>
<dbReference type="OrthoDB" id="9779889at2"/>
<dbReference type="Proteomes" id="UP000001938">
    <property type="component" value="Chromosome"/>
</dbReference>
<dbReference type="GO" id="GO:0005737">
    <property type="term" value="C:cytoplasm"/>
    <property type="evidence" value="ECO:0007669"/>
    <property type="project" value="UniProtKB-SubCell"/>
</dbReference>
<dbReference type="GO" id="GO:0005524">
    <property type="term" value="F:ATP binding"/>
    <property type="evidence" value="ECO:0007669"/>
    <property type="project" value="InterPro"/>
</dbReference>
<dbReference type="GO" id="GO:0031072">
    <property type="term" value="F:heat shock protein binding"/>
    <property type="evidence" value="ECO:0007669"/>
    <property type="project" value="InterPro"/>
</dbReference>
<dbReference type="GO" id="GO:0051082">
    <property type="term" value="F:unfolded protein binding"/>
    <property type="evidence" value="ECO:0007669"/>
    <property type="project" value="UniProtKB-UniRule"/>
</dbReference>
<dbReference type="GO" id="GO:0008270">
    <property type="term" value="F:zinc ion binding"/>
    <property type="evidence" value="ECO:0007669"/>
    <property type="project" value="UniProtKB-UniRule"/>
</dbReference>
<dbReference type="GO" id="GO:0051085">
    <property type="term" value="P:chaperone cofactor-dependent protein refolding"/>
    <property type="evidence" value="ECO:0007669"/>
    <property type="project" value="TreeGrafter"/>
</dbReference>
<dbReference type="GO" id="GO:0006260">
    <property type="term" value="P:DNA replication"/>
    <property type="evidence" value="ECO:0007669"/>
    <property type="project" value="UniProtKB-KW"/>
</dbReference>
<dbReference type="GO" id="GO:0042026">
    <property type="term" value="P:protein refolding"/>
    <property type="evidence" value="ECO:0007669"/>
    <property type="project" value="TreeGrafter"/>
</dbReference>
<dbReference type="GO" id="GO:0009408">
    <property type="term" value="P:response to heat"/>
    <property type="evidence" value="ECO:0007669"/>
    <property type="project" value="InterPro"/>
</dbReference>
<dbReference type="CDD" id="cd06257">
    <property type="entry name" value="DnaJ"/>
    <property type="match status" value="1"/>
</dbReference>
<dbReference type="CDD" id="cd10747">
    <property type="entry name" value="DnaJ_C"/>
    <property type="match status" value="1"/>
</dbReference>
<dbReference type="CDD" id="cd10719">
    <property type="entry name" value="DnaJ_zf"/>
    <property type="match status" value="1"/>
</dbReference>
<dbReference type="FunFam" id="2.60.260.20:FF:000005">
    <property type="entry name" value="Chaperone protein dnaJ 1, mitochondrial"/>
    <property type="match status" value="1"/>
</dbReference>
<dbReference type="FunFam" id="1.10.287.110:FF:000031">
    <property type="entry name" value="Molecular chaperone DnaJ"/>
    <property type="match status" value="1"/>
</dbReference>
<dbReference type="FunFam" id="2.10.230.10:FF:000002">
    <property type="entry name" value="Molecular chaperone DnaJ"/>
    <property type="match status" value="1"/>
</dbReference>
<dbReference type="FunFam" id="2.60.260.20:FF:000009">
    <property type="entry name" value="Putative Mitochondrial DnaJ chaperone"/>
    <property type="match status" value="1"/>
</dbReference>
<dbReference type="Gene3D" id="1.10.287.110">
    <property type="entry name" value="DnaJ domain"/>
    <property type="match status" value="1"/>
</dbReference>
<dbReference type="Gene3D" id="2.10.230.10">
    <property type="entry name" value="Heat shock protein DnaJ, cysteine-rich domain"/>
    <property type="match status" value="1"/>
</dbReference>
<dbReference type="Gene3D" id="2.60.260.20">
    <property type="entry name" value="Urease metallochaperone UreE, N-terminal domain"/>
    <property type="match status" value="2"/>
</dbReference>
<dbReference type="HAMAP" id="MF_01152">
    <property type="entry name" value="DnaJ"/>
    <property type="match status" value="1"/>
</dbReference>
<dbReference type="InterPro" id="IPR012724">
    <property type="entry name" value="DnaJ"/>
</dbReference>
<dbReference type="InterPro" id="IPR002939">
    <property type="entry name" value="DnaJ_C"/>
</dbReference>
<dbReference type="InterPro" id="IPR001623">
    <property type="entry name" value="DnaJ_domain"/>
</dbReference>
<dbReference type="InterPro" id="IPR018253">
    <property type="entry name" value="DnaJ_domain_CS"/>
</dbReference>
<dbReference type="InterPro" id="IPR008971">
    <property type="entry name" value="HSP40/DnaJ_pept-bd"/>
</dbReference>
<dbReference type="InterPro" id="IPR001305">
    <property type="entry name" value="HSP_DnaJ_Cys-rich_dom"/>
</dbReference>
<dbReference type="InterPro" id="IPR036410">
    <property type="entry name" value="HSP_DnaJ_Cys-rich_dom_sf"/>
</dbReference>
<dbReference type="InterPro" id="IPR036869">
    <property type="entry name" value="J_dom_sf"/>
</dbReference>
<dbReference type="NCBIfam" id="TIGR02349">
    <property type="entry name" value="DnaJ_bact"/>
    <property type="match status" value="1"/>
</dbReference>
<dbReference type="NCBIfam" id="NF008035">
    <property type="entry name" value="PRK10767.1"/>
    <property type="match status" value="1"/>
</dbReference>
<dbReference type="NCBIfam" id="NF010886">
    <property type="entry name" value="PRK14293.1"/>
    <property type="match status" value="1"/>
</dbReference>
<dbReference type="PANTHER" id="PTHR43096:SF10">
    <property type="entry name" value="CHAPERONE PROTEIN DNAJ A6, CHLOROPLASTIC"/>
    <property type="match status" value="1"/>
</dbReference>
<dbReference type="PANTHER" id="PTHR43096">
    <property type="entry name" value="DNAJ HOMOLOG 1, MITOCHONDRIAL-RELATED"/>
    <property type="match status" value="1"/>
</dbReference>
<dbReference type="Pfam" id="PF00226">
    <property type="entry name" value="DnaJ"/>
    <property type="match status" value="1"/>
</dbReference>
<dbReference type="Pfam" id="PF01556">
    <property type="entry name" value="DnaJ_C"/>
    <property type="match status" value="1"/>
</dbReference>
<dbReference type="Pfam" id="PF00684">
    <property type="entry name" value="DnaJ_CXXCXGXG"/>
    <property type="match status" value="1"/>
</dbReference>
<dbReference type="PRINTS" id="PR00625">
    <property type="entry name" value="JDOMAIN"/>
</dbReference>
<dbReference type="SMART" id="SM00271">
    <property type="entry name" value="DnaJ"/>
    <property type="match status" value="1"/>
</dbReference>
<dbReference type="SUPFAM" id="SSF46565">
    <property type="entry name" value="Chaperone J-domain"/>
    <property type="match status" value="1"/>
</dbReference>
<dbReference type="SUPFAM" id="SSF57938">
    <property type="entry name" value="DnaJ/Hsp40 cysteine-rich domain"/>
    <property type="match status" value="1"/>
</dbReference>
<dbReference type="SUPFAM" id="SSF49493">
    <property type="entry name" value="HSP40/DnaJ peptide-binding domain"/>
    <property type="match status" value="2"/>
</dbReference>
<dbReference type="PROSITE" id="PS00636">
    <property type="entry name" value="DNAJ_1"/>
    <property type="match status" value="1"/>
</dbReference>
<dbReference type="PROSITE" id="PS50076">
    <property type="entry name" value="DNAJ_2"/>
    <property type="match status" value="1"/>
</dbReference>
<dbReference type="PROSITE" id="PS51188">
    <property type="entry name" value="ZF_CR"/>
    <property type="match status" value="1"/>
</dbReference>
<organism>
    <name type="scientific">Synechococcus sp. (strain JA-2-3B'a(2-13))</name>
    <name type="common">Cyanobacteria bacterium Yellowstone B-Prime</name>
    <dbReference type="NCBI Taxonomy" id="321332"/>
    <lineage>
        <taxon>Bacteria</taxon>
        <taxon>Bacillati</taxon>
        <taxon>Cyanobacteriota</taxon>
        <taxon>Cyanophyceae</taxon>
        <taxon>Synechococcales</taxon>
        <taxon>Synechococcaceae</taxon>
        <taxon>Synechococcus</taxon>
    </lineage>
</organism>
<name>DNAJ_SYNJB</name>
<sequence>MARDYYEILGVSRDSSKEEIKRAYRRLARKYHPDVNKEPGAEERFKEINRAYEVLSDNELKARYDRFGEAGLSGAAAAASGFQDFAGMGGFADIFESFFTNFAGAGASYARSRQGPVRGDDLRFDLKLEFLEAIFGGEKQIRISHLEVCNVCGGSGAKPGTEVKTCPTCGGSGQVRRATRTPFGNFTQVSVCPTCGGSGQVLEEPCYNCNGEGLAQTTKKLRINIPAGVDSGTRLRVSGEGDAGRRGGPPGDLYVYLFVEPDPDFQRDGLTILSEVRVSYLQAILGAKVSVPTVDSKAGLEEEVELTIPAGSQPGTVLTLEGKGVPRIGNPMSRGDHQITLVVEIPTRISSEERELLMRLAELHGERINKRDGFLGGLLRGLAQMPGNREREEE</sequence>
<proteinExistence type="inferred from homology"/>
<evidence type="ECO:0000255" key="1">
    <source>
        <dbReference type="HAMAP-Rule" id="MF_01152"/>
    </source>
</evidence>
<feature type="chain" id="PRO_1000085321" description="Chaperone protein DnaJ">
    <location>
        <begin position="1"/>
        <end position="394"/>
    </location>
</feature>
<feature type="domain" description="J" evidence="1">
    <location>
        <begin position="4"/>
        <end position="68"/>
    </location>
</feature>
<feature type="repeat" description="CXXCXGXG motif">
    <location>
        <begin position="149"/>
        <end position="156"/>
    </location>
</feature>
<feature type="repeat" description="CXXCXGXG motif">
    <location>
        <begin position="166"/>
        <end position="173"/>
    </location>
</feature>
<feature type="repeat" description="CXXCXGXG motif">
    <location>
        <begin position="192"/>
        <end position="199"/>
    </location>
</feature>
<feature type="repeat" description="CXXCXGXG motif">
    <location>
        <begin position="206"/>
        <end position="213"/>
    </location>
</feature>
<feature type="zinc finger region" description="CR-type" evidence="1">
    <location>
        <begin position="136"/>
        <end position="218"/>
    </location>
</feature>
<feature type="binding site" evidence="1">
    <location>
        <position position="149"/>
    </location>
    <ligand>
        <name>Zn(2+)</name>
        <dbReference type="ChEBI" id="CHEBI:29105"/>
        <label>1</label>
    </ligand>
</feature>
<feature type="binding site" evidence="1">
    <location>
        <position position="152"/>
    </location>
    <ligand>
        <name>Zn(2+)</name>
        <dbReference type="ChEBI" id="CHEBI:29105"/>
        <label>1</label>
    </ligand>
</feature>
<feature type="binding site" evidence="1">
    <location>
        <position position="166"/>
    </location>
    <ligand>
        <name>Zn(2+)</name>
        <dbReference type="ChEBI" id="CHEBI:29105"/>
        <label>2</label>
    </ligand>
</feature>
<feature type="binding site" evidence="1">
    <location>
        <position position="169"/>
    </location>
    <ligand>
        <name>Zn(2+)</name>
        <dbReference type="ChEBI" id="CHEBI:29105"/>
        <label>2</label>
    </ligand>
</feature>
<feature type="binding site" evidence="1">
    <location>
        <position position="192"/>
    </location>
    <ligand>
        <name>Zn(2+)</name>
        <dbReference type="ChEBI" id="CHEBI:29105"/>
        <label>2</label>
    </ligand>
</feature>
<feature type="binding site" evidence="1">
    <location>
        <position position="195"/>
    </location>
    <ligand>
        <name>Zn(2+)</name>
        <dbReference type="ChEBI" id="CHEBI:29105"/>
        <label>2</label>
    </ligand>
</feature>
<feature type="binding site" evidence="1">
    <location>
        <position position="206"/>
    </location>
    <ligand>
        <name>Zn(2+)</name>
        <dbReference type="ChEBI" id="CHEBI:29105"/>
        <label>1</label>
    </ligand>
</feature>
<feature type="binding site" evidence="1">
    <location>
        <position position="209"/>
    </location>
    <ligand>
        <name>Zn(2+)</name>
        <dbReference type="ChEBI" id="CHEBI:29105"/>
        <label>1</label>
    </ligand>
</feature>
<comment type="function">
    <text evidence="1">Participates actively in the response to hyperosmotic and heat shock by preventing the aggregation of stress-denatured proteins and by disaggregating proteins, also in an autonomous, DnaK-independent fashion. Unfolded proteins bind initially to DnaJ; upon interaction with the DnaJ-bound protein, DnaK hydrolyzes its bound ATP, resulting in the formation of a stable complex. GrpE releases ADP from DnaK; ATP binding to DnaK triggers the release of the substrate protein, thus completing the reaction cycle. Several rounds of ATP-dependent interactions between DnaJ, DnaK and GrpE are required for fully efficient folding. Also involved, together with DnaK and GrpE, in the DNA replication of plasmids through activation of initiation proteins.</text>
</comment>
<comment type="cofactor">
    <cofactor evidence="1">
        <name>Zn(2+)</name>
        <dbReference type="ChEBI" id="CHEBI:29105"/>
    </cofactor>
    <text evidence="1">Binds 2 Zn(2+) ions per monomer.</text>
</comment>
<comment type="subunit">
    <text evidence="1">Homodimer.</text>
</comment>
<comment type="subcellular location">
    <subcellularLocation>
        <location evidence="1">Cytoplasm</location>
    </subcellularLocation>
</comment>
<comment type="domain">
    <text evidence="1">The J domain is necessary and sufficient to stimulate DnaK ATPase activity. Zinc center 1 plays an important role in the autonomous, DnaK-independent chaperone activity of DnaJ. Zinc center 2 is essential for interaction with DnaK and for DnaJ activity.</text>
</comment>
<comment type="similarity">
    <text evidence="1">Belongs to the DnaJ family.</text>
</comment>
<protein>
    <recommendedName>
        <fullName evidence="1">Chaperone protein DnaJ</fullName>
    </recommendedName>
</protein>